<protein>
    <recommendedName>
        <fullName evidence="1">Transcription antitermination protein NusB</fullName>
    </recommendedName>
    <alternativeName>
        <fullName evidence="1">Antitermination factor NusB</fullName>
    </alternativeName>
</protein>
<feature type="chain" id="PRO_1000092520" description="Transcription antitermination protein NusB">
    <location>
        <begin position="1"/>
        <end position="149"/>
    </location>
</feature>
<sequence>MSQTLQAAYAAKRKARRFAVQGIYEWQMSHNPVHEIEARTRAENAMHKVDLNYYHELLTQVIAQHEDLDALLIPVLDREIDALDGVELATLRLGAYELRDHLEIPYRVVLDEAIELAKHFGGADSHKYINGVLDRLSSTLRSAEKQQAK</sequence>
<dbReference type="EMBL" id="CU459141">
    <property type="protein sequence ID" value="CAM85081.1"/>
    <property type="molecule type" value="Genomic_DNA"/>
</dbReference>
<dbReference type="RefSeq" id="WP_000084188.1">
    <property type="nucleotide sequence ID" value="NZ_JBDGFB010000004.1"/>
</dbReference>
<dbReference type="SMR" id="B0V9X4"/>
<dbReference type="EnsemblBacteria" id="CAM85081">
    <property type="protein sequence ID" value="CAM85081"/>
    <property type="gene ID" value="ABAYE0094"/>
</dbReference>
<dbReference type="GeneID" id="92895632"/>
<dbReference type="KEGG" id="aby:ABAYE0094"/>
<dbReference type="HOGENOM" id="CLU_087843_4_1_6"/>
<dbReference type="GO" id="GO:0005829">
    <property type="term" value="C:cytosol"/>
    <property type="evidence" value="ECO:0007669"/>
    <property type="project" value="TreeGrafter"/>
</dbReference>
<dbReference type="GO" id="GO:0003723">
    <property type="term" value="F:RNA binding"/>
    <property type="evidence" value="ECO:0007669"/>
    <property type="project" value="UniProtKB-UniRule"/>
</dbReference>
<dbReference type="GO" id="GO:0006353">
    <property type="term" value="P:DNA-templated transcription termination"/>
    <property type="evidence" value="ECO:0007669"/>
    <property type="project" value="UniProtKB-UniRule"/>
</dbReference>
<dbReference type="GO" id="GO:0031564">
    <property type="term" value="P:transcription antitermination"/>
    <property type="evidence" value="ECO:0007669"/>
    <property type="project" value="UniProtKB-KW"/>
</dbReference>
<dbReference type="Gene3D" id="1.10.940.10">
    <property type="entry name" value="NusB-like"/>
    <property type="match status" value="1"/>
</dbReference>
<dbReference type="HAMAP" id="MF_00073">
    <property type="entry name" value="NusB"/>
    <property type="match status" value="1"/>
</dbReference>
<dbReference type="InterPro" id="IPR035926">
    <property type="entry name" value="NusB-like_sf"/>
</dbReference>
<dbReference type="InterPro" id="IPR011605">
    <property type="entry name" value="NusB_fam"/>
</dbReference>
<dbReference type="InterPro" id="IPR006027">
    <property type="entry name" value="NusB_RsmB_TIM44"/>
</dbReference>
<dbReference type="NCBIfam" id="TIGR01951">
    <property type="entry name" value="nusB"/>
    <property type="match status" value="1"/>
</dbReference>
<dbReference type="PANTHER" id="PTHR11078:SF3">
    <property type="entry name" value="ANTITERMINATION NUSB DOMAIN-CONTAINING PROTEIN"/>
    <property type="match status" value="1"/>
</dbReference>
<dbReference type="PANTHER" id="PTHR11078">
    <property type="entry name" value="N UTILIZATION SUBSTANCE PROTEIN B-RELATED"/>
    <property type="match status" value="1"/>
</dbReference>
<dbReference type="Pfam" id="PF01029">
    <property type="entry name" value="NusB"/>
    <property type="match status" value="1"/>
</dbReference>
<dbReference type="SUPFAM" id="SSF48013">
    <property type="entry name" value="NusB-like"/>
    <property type="match status" value="1"/>
</dbReference>
<organism>
    <name type="scientific">Acinetobacter baumannii (strain AYE)</name>
    <dbReference type="NCBI Taxonomy" id="509173"/>
    <lineage>
        <taxon>Bacteria</taxon>
        <taxon>Pseudomonadati</taxon>
        <taxon>Pseudomonadota</taxon>
        <taxon>Gammaproteobacteria</taxon>
        <taxon>Moraxellales</taxon>
        <taxon>Moraxellaceae</taxon>
        <taxon>Acinetobacter</taxon>
        <taxon>Acinetobacter calcoaceticus/baumannii complex</taxon>
    </lineage>
</organism>
<keyword id="KW-0694">RNA-binding</keyword>
<keyword id="KW-0804">Transcription</keyword>
<keyword id="KW-0889">Transcription antitermination</keyword>
<keyword id="KW-0805">Transcription regulation</keyword>
<accession>B0V9X4</accession>
<evidence type="ECO:0000255" key="1">
    <source>
        <dbReference type="HAMAP-Rule" id="MF_00073"/>
    </source>
</evidence>
<comment type="function">
    <text evidence="1">Involved in transcription antitermination. Required for transcription of ribosomal RNA (rRNA) genes. Binds specifically to the boxA antiterminator sequence of the ribosomal RNA (rrn) operons.</text>
</comment>
<comment type="similarity">
    <text evidence="1">Belongs to the NusB family.</text>
</comment>
<reference key="1">
    <citation type="journal article" date="2008" name="PLoS ONE">
        <title>Comparative analysis of Acinetobacters: three genomes for three lifestyles.</title>
        <authorList>
            <person name="Vallenet D."/>
            <person name="Nordmann P."/>
            <person name="Barbe V."/>
            <person name="Poirel L."/>
            <person name="Mangenot S."/>
            <person name="Bataille E."/>
            <person name="Dossat C."/>
            <person name="Gas S."/>
            <person name="Kreimeyer A."/>
            <person name="Lenoble P."/>
            <person name="Oztas S."/>
            <person name="Poulain J."/>
            <person name="Segurens B."/>
            <person name="Robert C."/>
            <person name="Abergel C."/>
            <person name="Claverie J.-M."/>
            <person name="Raoult D."/>
            <person name="Medigue C."/>
            <person name="Weissenbach J."/>
            <person name="Cruveiller S."/>
        </authorList>
    </citation>
    <scope>NUCLEOTIDE SEQUENCE [LARGE SCALE GENOMIC DNA]</scope>
    <source>
        <strain>AYE</strain>
    </source>
</reference>
<name>NUSB_ACIBY</name>
<proteinExistence type="inferred from homology"/>
<gene>
    <name evidence="1" type="primary">nusB</name>
    <name type="ordered locus">ABAYE0094</name>
</gene>